<keyword id="KW-0067">ATP-binding</keyword>
<keyword id="KW-0143">Chaperone</keyword>
<keyword id="KW-0963">Cytoplasm</keyword>
<keyword id="KW-0547">Nucleotide-binding</keyword>
<dbReference type="EMBL" id="CP000937">
    <property type="protein sequence ID" value="ABZ87815.1"/>
    <property type="molecule type" value="Genomic_DNA"/>
</dbReference>
<dbReference type="SMR" id="B0TZG2"/>
<dbReference type="KEGG" id="fph:Fphi_1591"/>
<dbReference type="eggNOG" id="COG1220">
    <property type="taxonomic scope" value="Bacteria"/>
</dbReference>
<dbReference type="HOGENOM" id="CLU_033123_0_0_6"/>
<dbReference type="GO" id="GO:0009376">
    <property type="term" value="C:HslUV protease complex"/>
    <property type="evidence" value="ECO:0007669"/>
    <property type="project" value="UniProtKB-UniRule"/>
</dbReference>
<dbReference type="GO" id="GO:0005524">
    <property type="term" value="F:ATP binding"/>
    <property type="evidence" value="ECO:0007669"/>
    <property type="project" value="UniProtKB-UniRule"/>
</dbReference>
<dbReference type="GO" id="GO:0016887">
    <property type="term" value="F:ATP hydrolysis activity"/>
    <property type="evidence" value="ECO:0007669"/>
    <property type="project" value="InterPro"/>
</dbReference>
<dbReference type="GO" id="GO:0008233">
    <property type="term" value="F:peptidase activity"/>
    <property type="evidence" value="ECO:0007669"/>
    <property type="project" value="InterPro"/>
</dbReference>
<dbReference type="GO" id="GO:0036402">
    <property type="term" value="F:proteasome-activating activity"/>
    <property type="evidence" value="ECO:0007669"/>
    <property type="project" value="UniProtKB-UniRule"/>
</dbReference>
<dbReference type="GO" id="GO:0043335">
    <property type="term" value="P:protein unfolding"/>
    <property type="evidence" value="ECO:0007669"/>
    <property type="project" value="UniProtKB-UniRule"/>
</dbReference>
<dbReference type="GO" id="GO:0051603">
    <property type="term" value="P:proteolysis involved in protein catabolic process"/>
    <property type="evidence" value="ECO:0007669"/>
    <property type="project" value="TreeGrafter"/>
</dbReference>
<dbReference type="CDD" id="cd19498">
    <property type="entry name" value="RecA-like_HslU"/>
    <property type="match status" value="1"/>
</dbReference>
<dbReference type="FunFam" id="3.40.50.300:FF:000213">
    <property type="entry name" value="ATP-dependent protease ATPase subunit HslU"/>
    <property type="match status" value="1"/>
</dbReference>
<dbReference type="FunFam" id="3.40.50.300:FF:000220">
    <property type="entry name" value="ATP-dependent protease ATPase subunit HslU"/>
    <property type="match status" value="1"/>
</dbReference>
<dbReference type="Gene3D" id="1.10.8.60">
    <property type="match status" value="1"/>
</dbReference>
<dbReference type="Gene3D" id="3.40.50.300">
    <property type="entry name" value="P-loop containing nucleotide triphosphate hydrolases"/>
    <property type="match status" value="2"/>
</dbReference>
<dbReference type="HAMAP" id="MF_00249">
    <property type="entry name" value="HslU"/>
    <property type="match status" value="1"/>
</dbReference>
<dbReference type="InterPro" id="IPR003593">
    <property type="entry name" value="AAA+_ATPase"/>
</dbReference>
<dbReference type="InterPro" id="IPR050052">
    <property type="entry name" value="ATP-dep_Clp_protease_ClpX"/>
</dbReference>
<dbReference type="InterPro" id="IPR003959">
    <property type="entry name" value="ATPase_AAA_core"/>
</dbReference>
<dbReference type="InterPro" id="IPR019489">
    <property type="entry name" value="Clp_ATPase_C"/>
</dbReference>
<dbReference type="InterPro" id="IPR004491">
    <property type="entry name" value="HslU"/>
</dbReference>
<dbReference type="InterPro" id="IPR027417">
    <property type="entry name" value="P-loop_NTPase"/>
</dbReference>
<dbReference type="NCBIfam" id="TIGR00390">
    <property type="entry name" value="hslU"/>
    <property type="match status" value="1"/>
</dbReference>
<dbReference type="NCBIfam" id="NF003544">
    <property type="entry name" value="PRK05201.1"/>
    <property type="match status" value="1"/>
</dbReference>
<dbReference type="PANTHER" id="PTHR48102">
    <property type="entry name" value="ATP-DEPENDENT CLP PROTEASE ATP-BINDING SUBUNIT CLPX-LIKE, MITOCHONDRIAL-RELATED"/>
    <property type="match status" value="1"/>
</dbReference>
<dbReference type="PANTHER" id="PTHR48102:SF3">
    <property type="entry name" value="ATP-DEPENDENT PROTEASE ATPASE SUBUNIT HSLU"/>
    <property type="match status" value="1"/>
</dbReference>
<dbReference type="Pfam" id="PF00004">
    <property type="entry name" value="AAA"/>
    <property type="match status" value="1"/>
</dbReference>
<dbReference type="Pfam" id="PF07724">
    <property type="entry name" value="AAA_2"/>
    <property type="match status" value="1"/>
</dbReference>
<dbReference type="SMART" id="SM00382">
    <property type="entry name" value="AAA"/>
    <property type="match status" value="1"/>
</dbReference>
<dbReference type="SMART" id="SM01086">
    <property type="entry name" value="ClpB_D2-small"/>
    <property type="match status" value="1"/>
</dbReference>
<dbReference type="SUPFAM" id="SSF52540">
    <property type="entry name" value="P-loop containing nucleoside triphosphate hydrolases"/>
    <property type="match status" value="1"/>
</dbReference>
<evidence type="ECO:0000255" key="1">
    <source>
        <dbReference type="HAMAP-Rule" id="MF_00249"/>
    </source>
</evidence>
<proteinExistence type="inferred from homology"/>
<organism>
    <name type="scientific">Francisella philomiragia subsp. philomiragia (strain ATCC 25017 / CCUG 19701 / FSC 153 / O#319-036)</name>
    <dbReference type="NCBI Taxonomy" id="484022"/>
    <lineage>
        <taxon>Bacteria</taxon>
        <taxon>Pseudomonadati</taxon>
        <taxon>Pseudomonadota</taxon>
        <taxon>Gammaproteobacteria</taxon>
        <taxon>Thiotrichales</taxon>
        <taxon>Francisellaceae</taxon>
        <taxon>Francisella</taxon>
    </lineage>
</organism>
<sequence>MTQVMTPKTIVHELERHIIGQNDAKKAVAIALRNRWRRMQLDDEMRQEVTPKNILMIGPTGVGKTEIARRLAKLADAPFIKVEATKFTEVGYVGKDVESIIRDLVETAVKMKREEAKQKVTEKAAILAEDRILDVLIPPARASESKVGFANEPAEDAQSKKEKENKTREIFRKKIQNGELNDKEIEIEVSVAPKSIGVMGPPGMEDMTNQLQDLFSSLSSDKKKTKKMRIKDAIKLVKDEEAAKLINEEDIKARALESVEQNGIVFLDEIDKVCKKSGTSGADVSREGVQRDLLPLVEGSTVSTKYGMIKTDHILFIASGAFHVAKPSDLIPELQGRLPIRVELKSLEIEDFVRILKEPDCSILKQYIALMKTEGVELSFEEDAIRKIAEISFQVNEEVENIGARRLHTVMERLLEEISFDAPDLENKSINITTDYINEKLSGLVKNKNLSQYIL</sequence>
<gene>
    <name evidence="1" type="primary">hslU</name>
    <name type="ordered locus">Fphi_1591</name>
</gene>
<protein>
    <recommendedName>
        <fullName evidence="1">ATP-dependent protease ATPase subunit HslU</fullName>
    </recommendedName>
    <alternativeName>
        <fullName evidence="1">Unfoldase HslU</fullName>
    </alternativeName>
</protein>
<comment type="function">
    <text evidence="1">ATPase subunit of a proteasome-like degradation complex; this subunit has chaperone activity. The binding of ATP and its subsequent hydrolysis by HslU are essential for unfolding of protein substrates subsequently hydrolyzed by HslV. HslU recognizes the N-terminal part of its protein substrates and unfolds these before they are guided to HslV for hydrolysis.</text>
</comment>
<comment type="subunit">
    <text evidence="1">A double ring-shaped homohexamer of HslV is capped on each side by a ring-shaped HslU homohexamer. The assembly of the HslU/HslV complex is dependent on binding of ATP.</text>
</comment>
<comment type="subcellular location">
    <subcellularLocation>
        <location evidence="1">Cytoplasm</location>
    </subcellularLocation>
</comment>
<comment type="similarity">
    <text evidence="1">Belongs to the ClpX chaperone family. HslU subfamily.</text>
</comment>
<accession>B0TZG2</accession>
<name>HSLU_FRAP2</name>
<feature type="chain" id="PRO_1000078446" description="ATP-dependent protease ATPase subunit HslU">
    <location>
        <begin position="1"/>
        <end position="455"/>
    </location>
</feature>
<feature type="binding site" evidence="1">
    <location>
        <position position="19"/>
    </location>
    <ligand>
        <name>ATP</name>
        <dbReference type="ChEBI" id="CHEBI:30616"/>
    </ligand>
</feature>
<feature type="binding site" evidence="1">
    <location>
        <begin position="61"/>
        <end position="66"/>
    </location>
    <ligand>
        <name>ATP</name>
        <dbReference type="ChEBI" id="CHEBI:30616"/>
    </ligand>
</feature>
<feature type="binding site" evidence="1">
    <location>
        <position position="268"/>
    </location>
    <ligand>
        <name>ATP</name>
        <dbReference type="ChEBI" id="CHEBI:30616"/>
    </ligand>
</feature>
<feature type="binding site" evidence="1">
    <location>
        <position position="333"/>
    </location>
    <ligand>
        <name>ATP</name>
        <dbReference type="ChEBI" id="CHEBI:30616"/>
    </ligand>
</feature>
<feature type="binding site" evidence="1">
    <location>
        <position position="405"/>
    </location>
    <ligand>
        <name>ATP</name>
        <dbReference type="ChEBI" id="CHEBI:30616"/>
    </ligand>
</feature>
<reference key="1">
    <citation type="submission" date="2007-12" db="EMBL/GenBank/DDBJ databases">
        <title>Complete sequence of chromosome of Francisella philomiragia subsp. philomiragia ATCC 25017.</title>
        <authorList>
            <consortium name="US DOE Joint Genome Institute"/>
            <person name="Copeland A."/>
            <person name="Lucas S."/>
            <person name="Lapidus A."/>
            <person name="Barry K."/>
            <person name="Detter J.C."/>
            <person name="Glavina del Rio T."/>
            <person name="Hammon N."/>
            <person name="Israni S."/>
            <person name="Dalin E."/>
            <person name="Tice H."/>
            <person name="Pitluck S."/>
            <person name="Chain P."/>
            <person name="Malfatti S."/>
            <person name="Shin M."/>
            <person name="Vergez L."/>
            <person name="Schmutz J."/>
            <person name="Larimer F."/>
            <person name="Land M."/>
            <person name="Hauser L."/>
            <person name="Richardson P."/>
        </authorList>
    </citation>
    <scope>NUCLEOTIDE SEQUENCE [LARGE SCALE GENOMIC DNA]</scope>
    <source>
        <strain>ATCC 25017 / CCUG 19701 / FSC 153 / O#319-036</strain>
    </source>
</reference>